<proteinExistence type="evidence at protein level"/>
<accession>P53757</accession>
<accession>D6W1P6</accession>
<evidence type="ECO:0000255" key="1"/>
<evidence type="ECO:0000255" key="2">
    <source>
        <dbReference type="PROSITE-ProRule" id="PRU10126"/>
    </source>
</evidence>
<evidence type="ECO:0000305" key="3"/>
<evidence type="ECO:0007829" key="4">
    <source>
        <dbReference type="PDB" id="1YGA"/>
    </source>
</evidence>
<protein>
    <recommendedName>
        <fullName>Uncharacterized isomerase YNR071C</fullName>
        <ecNumber>5.-.-.-</ecNumber>
    </recommendedName>
</protein>
<name>YN9A_YEAST</name>
<reference key="1">
    <citation type="journal article" date="1997" name="Nature">
        <title>The nucleotide sequence of Saccharomyces cerevisiae chromosome XIV and its evolutionary implications.</title>
        <authorList>
            <person name="Philippsen P."/>
            <person name="Kleine K."/>
            <person name="Poehlmann R."/>
            <person name="Duesterhoeft A."/>
            <person name="Hamberg K."/>
            <person name="Hegemann J.H."/>
            <person name="Obermaier B."/>
            <person name="Urrestarazu L.A."/>
            <person name="Aert R."/>
            <person name="Albermann K."/>
            <person name="Altmann R."/>
            <person name="Andre B."/>
            <person name="Baladron V."/>
            <person name="Ballesta J.P.G."/>
            <person name="Becam A.-M."/>
            <person name="Beinhauer J.D."/>
            <person name="Boskovic J."/>
            <person name="Buitrago M.J."/>
            <person name="Bussereau F."/>
            <person name="Coster F."/>
            <person name="Crouzet M."/>
            <person name="D'Angelo M."/>
            <person name="Dal Pero F."/>
            <person name="De Antoni A."/>
            <person name="del Rey F."/>
            <person name="Doignon F."/>
            <person name="Domdey H."/>
            <person name="Dubois E."/>
            <person name="Fiedler T.A."/>
            <person name="Fleig U."/>
            <person name="Floeth M."/>
            <person name="Fritz C."/>
            <person name="Gaillardin C."/>
            <person name="Garcia-Cantalejo J.M."/>
            <person name="Glansdorff N."/>
            <person name="Goffeau A."/>
            <person name="Gueldener U."/>
            <person name="Herbert C.J."/>
            <person name="Heumann K."/>
            <person name="Heuss-Neitzel D."/>
            <person name="Hilbert H."/>
            <person name="Hinni K."/>
            <person name="Iraqui Houssaini I."/>
            <person name="Jacquet M."/>
            <person name="Jimenez A."/>
            <person name="Jonniaux J.-L."/>
            <person name="Karpfinger-Hartl L."/>
            <person name="Lanfranchi G."/>
            <person name="Lepingle A."/>
            <person name="Levesque H."/>
            <person name="Lyck R."/>
            <person name="Maftahi M."/>
            <person name="Mallet L."/>
            <person name="Maurer C.T.C."/>
            <person name="Messenguy F."/>
            <person name="Mewes H.-W."/>
            <person name="Moestl D."/>
            <person name="Nasr F."/>
            <person name="Nicaud J.-M."/>
            <person name="Niedenthal R.K."/>
            <person name="Pandolfo D."/>
            <person name="Pierard A."/>
            <person name="Piravandi E."/>
            <person name="Planta R.J."/>
            <person name="Pohl T.M."/>
            <person name="Purnelle B."/>
            <person name="Rebischung C."/>
            <person name="Remacha M.A."/>
            <person name="Revuelta J.L."/>
            <person name="Rinke M."/>
            <person name="Saiz J.E."/>
            <person name="Sartorello F."/>
            <person name="Scherens B."/>
            <person name="Sen-Gupta M."/>
            <person name="Soler-Mira A."/>
            <person name="Urbanus J.H.M."/>
            <person name="Valle G."/>
            <person name="Van Dyck L."/>
            <person name="Verhasselt P."/>
            <person name="Vierendeels F."/>
            <person name="Vissers S."/>
            <person name="Voet M."/>
            <person name="Volckaert G."/>
            <person name="Wach A."/>
            <person name="Wambutt R."/>
            <person name="Wedler H."/>
            <person name="Zollner A."/>
            <person name="Hani J."/>
        </authorList>
    </citation>
    <scope>NUCLEOTIDE SEQUENCE [LARGE SCALE GENOMIC DNA]</scope>
    <source>
        <strain>ATCC 204508 / S288c</strain>
    </source>
</reference>
<reference key="2">
    <citation type="journal article" date="2014" name="G3 (Bethesda)">
        <title>The reference genome sequence of Saccharomyces cerevisiae: Then and now.</title>
        <authorList>
            <person name="Engel S.R."/>
            <person name="Dietrich F.S."/>
            <person name="Fisk D.G."/>
            <person name="Binkley G."/>
            <person name="Balakrishnan R."/>
            <person name="Costanzo M.C."/>
            <person name="Dwight S.S."/>
            <person name="Hitz B.C."/>
            <person name="Karra K."/>
            <person name="Nash R.S."/>
            <person name="Weng S."/>
            <person name="Wong E.D."/>
            <person name="Lloyd P."/>
            <person name="Skrzypek M.S."/>
            <person name="Miyasato S.R."/>
            <person name="Simison M."/>
            <person name="Cherry J.M."/>
        </authorList>
    </citation>
    <scope>GENOME REANNOTATION</scope>
    <source>
        <strain>ATCC 204508 / S288c</strain>
    </source>
</reference>
<reference key="3">
    <citation type="journal article" date="2007" name="Genome Res.">
        <title>Approaching a complete repository of sequence-verified protein-encoding clones for Saccharomyces cerevisiae.</title>
        <authorList>
            <person name="Hu Y."/>
            <person name="Rolfs A."/>
            <person name="Bhullar B."/>
            <person name="Murthy T.V.S."/>
            <person name="Zhu C."/>
            <person name="Berger M.F."/>
            <person name="Camargo A.A."/>
            <person name="Kelley F."/>
            <person name="McCarron S."/>
            <person name="Jepson D."/>
            <person name="Richardson A."/>
            <person name="Raphael J."/>
            <person name="Moreira D."/>
            <person name="Taycher E."/>
            <person name="Zuo D."/>
            <person name="Mohr S."/>
            <person name="Kane M.F."/>
            <person name="Williamson J."/>
            <person name="Simpson A.J.G."/>
            <person name="Bulyk M.L."/>
            <person name="Harlow E."/>
            <person name="Marsischky G."/>
            <person name="Kolodner R.D."/>
            <person name="LaBaer J."/>
        </authorList>
    </citation>
    <scope>NUCLEOTIDE SEQUENCE [GENOMIC DNA]</scope>
    <source>
        <strain>ATCC 204508 / S288c</strain>
    </source>
</reference>
<dbReference type="EC" id="5.-.-.-"/>
<dbReference type="EMBL" id="Z71686">
    <property type="protein sequence ID" value="CAA96353.1"/>
    <property type="molecule type" value="Genomic_DNA"/>
</dbReference>
<dbReference type="EMBL" id="AY558019">
    <property type="protein sequence ID" value="AAS56345.1"/>
    <property type="molecule type" value="Genomic_DNA"/>
</dbReference>
<dbReference type="EMBL" id="BK006947">
    <property type="protein sequence ID" value="DAA10612.1"/>
    <property type="molecule type" value="Genomic_DNA"/>
</dbReference>
<dbReference type="PIR" id="S63404">
    <property type="entry name" value="S63404"/>
</dbReference>
<dbReference type="RefSeq" id="NP_014469.1">
    <property type="nucleotide sequence ID" value="NM_001183248.1"/>
</dbReference>
<dbReference type="PDB" id="1YGA">
    <property type="method" value="X-ray"/>
    <property type="resolution" value="2.00 A"/>
    <property type="chains" value="A/B=1-342"/>
</dbReference>
<dbReference type="PDBsum" id="1YGA"/>
<dbReference type="SMR" id="P53757"/>
<dbReference type="BioGRID" id="35897">
    <property type="interactions" value="74"/>
</dbReference>
<dbReference type="DIP" id="DIP-4561N"/>
<dbReference type="FunCoup" id="P53757">
    <property type="interactions" value="983"/>
</dbReference>
<dbReference type="IntAct" id="P53757">
    <property type="interactions" value="3"/>
</dbReference>
<dbReference type="MINT" id="P53757"/>
<dbReference type="STRING" id="4932.YNR071C"/>
<dbReference type="PaxDb" id="4932-YNR071C"/>
<dbReference type="PeptideAtlas" id="P53757"/>
<dbReference type="EnsemblFungi" id="YNR071C_mRNA">
    <property type="protein sequence ID" value="YNR071C"/>
    <property type="gene ID" value="YNR071C"/>
</dbReference>
<dbReference type="GeneID" id="855808"/>
<dbReference type="KEGG" id="sce:YNR071C"/>
<dbReference type="AGR" id="SGD:S000005354"/>
<dbReference type="SGD" id="S000005354">
    <property type="gene designation" value="YNR071C"/>
</dbReference>
<dbReference type="VEuPathDB" id="FungiDB:YNR071C"/>
<dbReference type="eggNOG" id="KOG1604">
    <property type="taxonomic scope" value="Eukaryota"/>
</dbReference>
<dbReference type="GeneTree" id="ENSGT00510000047589"/>
<dbReference type="HOGENOM" id="CLU_031753_3_0_1"/>
<dbReference type="InParanoid" id="P53757"/>
<dbReference type="OMA" id="CTFIIDA"/>
<dbReference type="OrthoDB" id="9402762at2759"/>
<dbReference type="BioCyc" id="YEAST:G3O-33375-MONOMER"/>
<dbReference type="BioGRID-ORCS" id="855808">
    <property type="hits" value="8 hits in 10 CRISPR screens"/>
</dbReference>
<dbReference type="EvolutionaryTrace" id="P53757"/>
<dbReference type="PRO" id="PR:P53757"/>
<dbReference type="Proteomes" id="UP000002311">
    <property type="component" value="Chromosome XIV"/>
</dbReference>
<dbReference type="RNAct" id="P53757">
    <property type="molecule type" value="protein"/>
</dbReference>
<dbReference type="GO" id="GO:0004034">
    <property type="term" value="F:aldose 1-epimerase activity"/>
    <property type="evidence" value="ECO:0000318"/>
    <property type="project" value="GO_Central"/>
</dbReference>
<dbReference type="GO" id="GO:0030246">
    <property type="term" value="F:carbohydrate binding"/>
    <property type="evidence" value="ECO:0007669"/>
    <property type="project" value="InterPro"/>
</dbReference>
<dbReference type="GO" id="GO:0033499">
    <property type="term" value="P:galactose catabolic process via UDP-galactose, Leloir pathway"/>
    <property type="evidence" value="ECO:0000318"/>
    <property type="project" value="GO_Central"/>
</dbReference>
<dbReference type="GO" id="GO:0006006">
    <property type="term" value="P:glucose metabolic process"/>
    <property type="evidence" value="ECO:0000318"/>
    <property type="project" value="GO_Central"/>
</dbReference>
<dbReference type="CDD" id="cd09019">
    <property type="entry name" value="galactose_mutarotase_like"/>
    <property type="match status" value="1"/>
</dbReference>
<dbReference type="FunFam" id="2.70.98.10:FF:000021">
    <property type="entry name" value="Uncharacterized isomerase YNR071C"/>
    <property type="match status" value="1"/>
</dbReference>
<dbReference type="Gene3D" id="2.70.98.10">
    <property type="match status" value="1"/>
</dbReference>
<dbReference type="InterPro" id="IPR018052">
    <property type="entry name" value="Ald1_epimerase_CS"/>
</dbReference>
<dbReference type="InterPro" id="IPR008183">
    <property type="entry name" value="Aldose_1/G6P_1-epimerase"/>
</dbReference>
<dbReference type="InterPro" id="IPR011013">
    <property type="entry name" value="Gal_mutarotase_sf_dom"/>
</dbReference>
<dbReference type="InterPro" id="IPR047215">
    <property type="entry name" value="Galactose_mutarotase-like"/>
</dbReference>
<dbReference type="InterPro" id="IPR014718">
    <property type="entry name" value="GH-type_carb-bd"/>
</dbReference>
<dbReference type="PANTHER" id="PTHR10091">
    <property type="entry name" value="ALDOSE-1-EPIMERASE"/>
    <property type="match status" value="1"/>
</dbReference>
<dbReference type="PANTHER" id="PTHR10091:SF0">
    <property type="entry name" value="GALACTOSE MUTAROTASE"/>
    <property type="match status" value="1"/>
</dbReference>
<dbReference type="Pfam" id="PF01263">
    <property type="entry name" value="Aldose_epim"/>
    <property type="match status" value="1"/>
</dbReference>
<dbReference type="SUPFAM" id="SSF74650">
    <property type="entry name" value="Galactose mutarotase-like"/>
    <property type="match status" value="1"/>
</dbReference>
<dbReference type="PROSITE" id="PS00545">
    <property type="entry name" value="ALDOSE_1_EPIMERASE"/>
    <property type="match status" value="1"/>
</dbReference>
<gene>
    <name type="ordered locus">YNR071C</name>
    <name type="ORF">N3605</name>
</gene>
<keyword id="KW-0002">3D-structure</keyword>
<keyword id="KW-0119">Carbohydrate metabolism</keyword>
<keyword id="KW-0413">Isomerase</keyword>
<keyword id="KW-1185">Reference proteome</keyword>
<organism>
    <name type="scientific">Saccharomyces cerevisiae (strain ATCC 204508 / S288c)</name>
    <name type="common">Baker's yeast</name>
    <dbReference type="NCBI Taxonomy" id="559292"/>
    <lineage>
        <taxon>Eukaryota</taxon>
        <taxon>Fungi</taxon>
        <taxon>Dikarya</taxon>
        <taxon>Ascomycota</taxon>
        <taxon>Saccharomycotina</taxon>
        <taxon>Saccharomycetes</taxon>
        <taxon>Saccharomycetales</taxon>
        <taxon>Saccharomycetaceae</taxon>
        <taxon>Saccharomyces</taxon>
    </lineage>
</organism>
<comment type="similarity">
    <text evidence="3">Belongs to the aldose epimerase family.</text>
</comment>
<feature type="chain" id="PRO_0000197449" description="Uncharacterized isomerase YNR071C">
    <location>
        <begin position="1"/>
        <end position="342"/>
    </location>
</feature>
<feature type="active site" description="Proton donor" evidence="2">
    <location>
        <position position="176"/>
    </location>
</feature>
<feature type="binding site" evidence="1">
    <location>
        <position position="69"/>
    </location>
    <ligand>
        <name>substrate</name>
    </ligand>
</feature>
<feature type="binding site" evidence="1">
    <location>
        <position position="240"/>
    </location>
    <ligand>
        <name>substrate</name>
    </ligand>
</feature>
<feature type="strand" evidence="4">
    <location>
        <begin position="13"/>
        <end position="17"/>
    </location>
</feature>
<feature type="turn" evidence="4">
    <location>
        <begin position="18"/>
        <end position="20"/>
    </location>
</feature>
<feature type="strand" evidence="4">
    <location>
        <begin position="21"/>
        <end position="26"/>
    </location>
</feature>
<feature type="strand" evidence="4">
    <location>
        <begin position="31"/>
        <end position="37"/>
    </location>
</feature>
<feature type="helix" evidence="4">
    <location>
        <begin position="49"/>
        <end position="52"/>
    </location>
</feature>
<feature type="strand" evidence="4">
    <location>
        <begin position="68"/>
        <end position="70"/>
    </location>
</feature>
<feature type="helix" evidence="4">
    <location>
        <begin position="71"/>
        <end position="73"/>
    </location>
</feature>
<feature type="strand" evidence="4">
    <location>
        <begin position="74"/>
        <end position="77"/>
    </location>
</feature>
<feature type="strand" evidence="4">
    <location>
        <begin position="80"/>
        <end position="83"/>
    </location>
</feature>
<feature type="strand" evidence="4">
    <location>
        <begin position="91"/>
        <end position="93"/>
    </location>
</feature>
<feature type="helix" evidence="4">
    <location>
        <begin position="96"/>
        <end position="98"/>
    </location>
</feature>
<feature type="helix" evidence="4">
    <location>
        <begin position="100"/>
        <end position="102"/>
    </location>
</feature>
<feature type="strand" evidence="4">
    <location>
        <begin position="111"/>
        <end position="114"/>
    </location>
</feature>
<feature type="strand" evidence="4">
    <location>
        <begin position="117"/>
        <end position="126"/>
    </location>
</feature>
<feature type="strand" evidence="4">
    <location>
        <begin position="128"/>
        <end position="132"/>
    </location>
</feature>
<feature type="strand" evidence="4">
    <location>
        <begin position="136"/>
        <end position="149"/>
    </location>
</feature>
<feature type="turn" evidence="4">
    <location>
        <begin position="150"/>
        <end position="153"/>
    </location>
</feature>
<feature type="strand" evidence="4">
    <location>
        <begin position="154"/>
        <end position="170"/>
    </location>
</feature>
<feature type="turn" evidence="4">
    <location>
        <begin position="181"/>
        <end position="185"/>
    </location>
</feature>
<feature type="strand" evidence="4">
    <location>
        <begin position="193"/>
        <end position="198"/>
    </location>
</feature>
<feature type="strand" evidence="4">
    <location>
        <begin position="201"/>
        <end position="205"/>
    </location>
</feature>
<feature type="turn" evidence="4">
    <location>
        <begin position="207"/>
        <end position="209"/>
    </location>
</feature>
<feature type="strand" evidence="4">
    <location>
        <begin position="212"/>
        <end position="218"/>
    </location>
</feature>
<feature type="strand" evidence="4">
    <location>
        <begin position="230"/>
        <end position="232"/>
    </location>
</feature>
<feature type="strand" evidence="4">
    <location>
        <begin position="240"/>
        <end position="244"/>
    </location>
</feature>
<feature type="turn" evidence="4">
    <location>
        <begin position="246"/>
        <end position="250"/>
    </location>
</feature>
<feature type="strand" evidence="4">
    <location>
        <begin position="253"/>
        <end position="255"/>
    </location>
</feature>
<feature type="turn" evidence="4">
    <location>
        <begin position="257"/>
        <end position="259"/>
    </location>
</feature>
<feature type="strand" evidence="4">
    <location>
        <begin position="263"/>
        <end position="269"/>
    </location>
</feature>
<feature type="turn" evidence="4">
    <location>
        <begin position="271"/>
        <end position="273"/>
    </location>
</feature>
<feature type="strand" evidence="4">
    <location>
        <begin position="276"/>
        <end position="289"/>
    </location>
</feature>
<feature type="strand" evidence="4">
    <location>
        <begin position="304"/>
        <end position="310"/>
    </location>
</feature>
<feature type="helix" evidence="4">
    <location>
        <begin position="314"/>
        <end position="316"/>
    </location>
</feature>
<feature type="helix" evidence="4">
    <location>
        <begin position="318"/>
        <end position="321"/>
    </location>
</feature>
<feature type="helix" evidence="4">
    <location>
        <begin position="322"/>
        <end position="324"/>
    </location>
</feature>
<feature type="strand" evidence="4">
    <location>
        <begin position="325"/>
        <end position="327"/>
    </location>
</feature>
<feature type="strand" evidence="4">
    <location>
        <begin position="332"/>
        <end position="341"/>
    </location>
</feature>
<sequence length="342" mass="37852">MSNSNGDNKYGVITIGDEKKFQATIAPLGATLVDLKVNGQSVVQGYSNVQDYLTDGNMMGATVGRYANRIAKGVFSLDDGPHKLTVNNCGNTNHSSISSLNLKQYKASPVENPSKGVYVVEFKLLDDHTQPNPNEFPGDLEVTVKYTLNVAEMTLDMEYQAQLVRGDATPINMTNHSYFNLNKVKSEKSIRGTEVKVCSNKSLEVTEGALLPTGKIIERNIATFDSTKPTVLHEDTPVFDCTFIIDANKDLKTTDSVSVNKLVPVFKAYHPESHIKFEVSTTEPTVHLYTGDNLCGKFVPRSGFAVQQGRYVDAINRDEWRGCVLLKRGEVYTSKTQYKFDI</sequence>